<accession>Q9SPL2</accession>
<feature type="chain" id="PRO_0000055875" description="E3 ubiquitin-protein ligase CIP8">
    <location>
        <begin position="1"/>
        <end position="334"/>
    </location>
</feature>
<feature type="zinc finger region" description="RING-type; atypical" evidence="1">
    <location>
        <begin position="257"/>
        <end position="298"/>
    </location>
</feature>
<feature type="region of interest" description="Disordered" evidence="2">
    <location>
        <begin position="111"/>
        <end position="158"/>
    </location>
</feature>
<feature type="region of interest" description="Disordered" evidence="2">
    <location>
        <begin position="307"/>
        <end position="334"/>
    </location>
</feature>
<feature type="compositionally biased region" description="Acidic residues" evidence="2">
    <location>
        <begin position="117"/>
        <end position="149"/>
    </location>
</feature>
<feature type="compositionally biased region" description="Low complexity" evidence="2">
    <location>
        <begin position="317"/>
        <end position="334"/>
    </location>
</feature>
<feature type="mutagenesis site" description="Abolishes interaction with COP1 and ubiquitination of HY5 in vitro; when associated with A-277; A-280 and A-283." evidence="3 4">
    <original>C</original>
    <variation>A</variation>
    <location>
        <position position="275"/>
    </location>
</feature>
<feature type="mutagenesis site" description="Abolishes interaction with COP1 and ubiquitination of HY5 in vitro; when associated with A-275; A-280 and A-283." evidence="3 4">
    <original>H</original>
    <variation>A</variation>
    <location>
        <position position="277"/>
    </location>
</feature>
<feature type="mutagenesis site" description="Abolishes interaction with COP1 and ubiquitination of HY5 in vitro; when associated with A-275; A-277 and A-283." evidence="3 4">
    <original>H</original>
    <variation>A</variation>
    <location>
        <position position="280"/>
    </location>
</feature>
<feature type="mutagenesis site" description="Abolishes interaction with COP1 and ubiquitination of HY5 in vitro; when associated with A-275; A-277 and A-280." evidence="3 4">
    <original>C</original>
    <variation>A</variation>
    <location>
        <position position="283"/>
    </location>
</feature>
<organism>
    <name type="scientific">Arabidopsis thaliana</name>
    <name type="common">Mouse-ear cress</name>
    <dbReference type="NCBI Taxonomy" id="3702"/>
    <lineage>
        <taxon>Eukaryota</taxon>
        <taxon>Viridiplantae</taxon>
        <taxon>Streptophyta</taxon>
        <taxon>Embryophyta</taxon>
        <taxon>Tracheophyta</taxon>
        <taxon>Spermatophyta</taxon>
        <taxon>Magnoliopsida</taxon>
        <taxon>eudicotyledons</taxon>
        <taxon>Gunneridae</taxon>
        <taxon>Pentapetalae</taxon>
        <taxon>rosids</taxon>
        <taxon>malvids</taxon>
        <taxon>Brassicales</taxon>
        <taxon>Brassicaceae</taxon>
        <taxon>Camelineae</taxon>
        <taxon>Arabidopsis</taxon>
    </lineage>
</organism>
<proteinExistence type="evidence at protein level"/>
<reference key="1">
    <citation type="journal article" date="1999" name="J. Biol. Chem.">
        <title>The RING finger motif of photomorphogenic repressor COP1 specifically interacts with the RING-H2 motif of a novel Arabidopsis protein.</title>
        <authorList>
            <person name="Torii K.U."/>
            <person name="Stoop-Myer C.D."/>
            <person name="Okamoto H."/>
            <person name="Coleman J.E."/>
            <person name="Matsui M."/>
            <person name="Deng X.-W."/>
        </authorList>
    </citation>
    <scope>NUCLEOTIDE SEQUENCE [MRNA]</scope>
    <scope>FUNCTION</scope>
    <scope>SUBCELLULAR LOCATION</scope>
    <scope>TISSUE SPECIFICITY</scope>
    <scope>INTERACTION WITH COP1</scope>
    <scope>MUTAGENESIS OF CYS-275; HIS-277; HIS-280 AND CYS-283</scope>
    <source>
        <strain>cv. Columbia</strain>
        <tissue>Seedling</tissue>
    </source>
</reference>
<reference key="2">
    <citation type="journal article" date="2000" name="DNA Res.">
        <title>Structural analysis of Arabidopsis thaliana chromosome 5. X. Sequence features of the regions of 3,076,755 bp covered by sixty P1 and TAC clones.</title>
        <authorList>
            <person name="Sato S."/>
            <person name="Nakamura Y."/>
            <person name="Kaneko T."/>
            <person name="Katoh T."/>
            <person name="Asamizu E."/>
            <person name="Kotani H."/>
            <person name="Tabata S."/>
        </authorList>
    </citation>
    <scope>NUCLEOTIDE SEQUENCE [LARGE SCALE GENOMIC DNA]</scope>
    <source>
        <strain>cv. Columbia</strain>
    </source>
</reference>
<reference key="3">
    <citation type="journal article" date="2017" name="Plant J.">
        <title>Araport11: a complete reannotation of the Arabidopsis thaliana reference genome.</title>
        <authorList>
            <person name="Cheng C.Y."/>
            <person name="Krishnakumar V."/>
            <person name="Chan A.P."/>
            <person name="Thibaud-Nissen F."/>
            <person name="Schobel S."/>
            <person name="Town C.D."/>
        </authorList>
    </citation>
    <scope>GENOME REANNOTATION</scope>
    <source>
        <strain>cv. Columbia</strain>
    </source>
</reference>
<reference key="4">
    <citation type="journal article" date="2003" name="Science">
        <title>Empirical analysis of transcriptional activity in the Arabidopsis genome.</title>
        <authorList>
            <person name="Yamada K."/>
            <person name="Lim J."/>
            <person name="Dale J.M."/>
            <person name="Chen H."/>
            <person name="Shinn P."/>
            <person name="Palm C.J."/>
            <person name="Southwick A.M."/>
            <person name="Wu H.C."/>
            <person name="Kim C.J."/>
            <person name="Nguyen M."/>
            <person name="Pham P.K."/>
            <person name="Cheuk R.F."/>
            <person name="Karlin-Newmann G."/>
            <person name="Liu S.X."/>
            <person name="Lam B."/>
            <person name="Sakano H."/>
            <person name="Wu T."/>
            <person name="Yu G."/>
            <person name="Miranda M."/>
            <person name="Quach H.L."/>
            <person name="Tripp M."/>
            <person name="Chang C.H."/>
            <person name="Lee J.M."/>
            <person name="Toriumi M.J."/>
            <person name="Chan M.M."/>
            <person name="Tang C.C."/>
            <person name="Onodera C.S."/>
            <person name="Deng J.M."/>
            <person name="Akiyama K."/>
            <person name="Ansari Y."/>
            <person name="Arakawa T."/>
            <person name="Banh J."/>
            <person name="Banno F."/>
            <person name="Bowser L."/>
            <person name="Brooks S.Y."/>
            <person name="Carninci P."/>
            <person name="Chao Q."/>
            <person name="Choy N."/>
            <person name="Enju A."/>
            <person name="Goldsmith A.D."/>
            <person name="Gurjal M."/>
            <person name="Hansen N.F."/>
            <person name="Hayashizaki Y."/>
            <person name="Johnson-Hopson C."/>
            <person name="Hsuan V.W."/>
            <person name="Iida K."/>
            <person name="Karnes M."/>
            <person name="Khan S."/>
            <person name="Koesema E."/>
            <person name="Ishida J."/>
            <person name="Jiang P.X."/>
            <person name="Jones T."/>
            <person name="Kawai J."/>
            <person name="Kamiya A."/>
            <person name="Meyers C."/>
            <person name="Nakajima M."/>
            <person name="Narusaka M."/>
            <person name="Seki M."/>
            <person name="Sakurai T."/>
            <person name="Satou M."/>
            <person name="Tamse R."/>
            <person name="Vaysberg M."/>
            <person name="Wallender E.K."/>
            <person name="Wong C."/>
            <person name="Yamamura Y."/>
            <person name="Yuan S."/>
            <person name="Shinozaki K."/>
            <person name="Davis R.W."/>
            <person name="Theologis A."/>
            <person name="Ecker J.R."/>
        </authorList>
    </citation>
    <scope>NUCLEOTIDE SEQUENCE [LARGE SCALE MRNA]</scope>
    <source>
        <strain>cv. Columbia</strain>
    </source>
</reference>
<reference key="5">
    <citation type="journal article" date="2002" name="Plant J.">
        <title>Biochemical evidence for ubiquitin ligase activity of the Arabidopsis COP1 interacting protein 8 (CIP8).</title>
        <authorList>
            <person name="Hardtke C.S."/>
            <person name="Okamoto H."/>
            <person name="Stoop-Myer C."/>
            <person name="Deng X.-W."/>
        </authorList>
    </citation>
    <scope>FUNCTION</scope>
    <scope>CATALYTIC ACTIVITY</scope>
    <scope>DOMAIN</scope>
    <scope>INTERACTION WITH UBC8</scope>
    <scope>MUTAGENESIS OF CYS-275; HIS-277; HIS-280 AND CYS-283</scope>
</reference>
<gene>
    <name type="primary">CIP8</name>
    <name type="ordered locus">At5g64920</name>
    <name type="ORF">MXK3.15</name>
</gene>
<protein>
    <recommendedName>
        <fullName>E3 ubiquitin-protein ligase CIP8</fullName>
        <ecNumber evidence="4">2.3.2.27</ecNumber>
    </recommendedName>
    <alternativeName>
        <fullName>COP1-interacting protein 8</fullName>
    </alternativeName>
    <alternativeName>
        <fullName evidence="5">RING-type E3 ubiquitin transferase CIP8</fullName>
    </alternativeName>
</protein>
<name>CIP8_ARATH</name>
<evidence type="ECO:0000255" key="1">
    <source>
        <dbReference type="PROSITE-ProRule" id="PRU00175"/>
    </source>
</evidence>
<evidence type="ECO:0000256" key="2">
    <source>
        <dbReference type="SAM" id="MobiDB-lite"/>
    </source>
</evidence>
<evidence type="ECO:0000269" key="3">
    <source>
    </source>
</evidence>
<evidence type="ECO:0000269" key="4">
    <source>
    </source>
</evidence>
<evidence type="ECO:0000305" key="5"/>
<evidence type="ECO:0000305" key="6">
    <source>
    </source>
</evidence>
<sequence length="334" mass="36965">MSDAPSSSPDATASHWCYHCNKRVVVETLDDFVVCCECNKGFVESIQPTPAAYSSPAPPQPLSPDLNVEDSSIGSHFLQMLRLLAHAPSQRSPPRHLDVLSYEDDFFRLELNSRNEIDDDEDEDEDDGDEEEEDEEENLTVNDEEDEEDDLRRRNRFPLTTTQSRTGRNRILDWAEILMGIEDNSIEFRMESDRYAGNPADYIDDAAGYEALLQNLAEGDGGGGGGRRGAPPAAKSAIEALETFEVSSSEGEMVMVCAVCKDGMVMGETGKKLPCGHCYHGDCIVPWLGTRNSCPVCRFQLETDDAEYEEERKKRTSTVSDSAAASSSSSTSRY</sequence>
<dbReference type="EC" id="2.3.2.27" evidence="4"/>
<dbReference type="EMBL" id="AF162150">
    <property type="protein sequence ID" value="AAD56636.1"/>
    <property type="molecule type" value="mRNA"/>
</dbReference>
<dbReference type="EMBL" id="AB019236">
    <property type="protein sequence ID" value="BAA97304.1"/>
    <property type="molecule type" value="Genomic_DNA"/>
</dbReference>
<dbReference type="EMBL" id="CP002688">
    <property type="protein sequence ID" value="AED97970.1"/>
    <property type="molecule type" value="Genomic_DNA"/>
</dbReference>
<dbReference type="EMBL" id="AY081279">
    <property type="protein sequence ID" value="AAL91168.1"/>
    <property type="molecule type" value="mRNA"/>
</dbReference>
<dbReference type="EMBL" id="BT008730">
    <property type="protein sequence ID" value="AAP42743.1"/>
    <property type="molecule type" value="mRNA"/>
</dbReference>
<dbReference type="PIR" id="T51245">
    <property type="entry name" value="T51245"/>
</dbReference>
<dbReference type="RefSeq" id="NP_201297.1">
    <property type="nucleotide sequence ID" value="NM_125891.3"/>
</dbReference>
<dbReference type="SMR" id="Q9SPL2"/>
<dbReference type="BioGRID" id="21858">
    <property type="interactions" value="4"/>
</dbReference>
<dbReference type="FunCoup" id="Q9SPL2">
    <property type="interactions" value="17"/>
</dbReference>
<dbReference type="IntAct" id="Q9SPL2">
    <property type="interactions" value="4"/>
</dbReference>
<dbReference type="STRING" id="3702.Q9SPL2"/>
<dbReference type="GlyGen" id="Q9SPL2">
    <property type="glycosylation" value="1 site"/>
</dbReference>
<dbReference type="PaxDb" id="3702-AT5G64920.1"/>
<dbReference type="ProteomicsDB" id="246679"/>
<dbReference type="EnsemblPlants" id="AT5G64920.1">
    <property type="protein sequence ID" value="AT5G64920.1"/>
    <property type="gene ID" value="AT5G64920"/>
</dbReference>
<dbReference type="GeneID" id="836616"/>
<dbReference type="Gramene" id="AT5G64920.1">
    <property type="protein sequence ID" value="AT5G64920.1"/>
    <property type="gene ID" value="AT5G64920"/>
</dbReference>
<dbReference type="KEGG" id="ath:AT5G64920"/>
<dbReference type="Araport" id="AT5G64920"/>
<dbReference type="TAIR" id="AT5G64920">
    <property type="gene designation" value="CIP8"/>
</dbReference>
<dbReference type="eggNOG" id="KOG0800">
    <property type="taxonomic scope" value="Eukaryota"/>
</dbReference>
<dbReference type="HOGENOM" id="CLU_053614_0_0_1"/>
<dbReference type="InParanoid" id="Q9SPL2"/>
<dbReference type="OMA" id="DDCIVQW"/>
<dbReference type="PhylomeDB" id="Q9SPL2"/>
<dbReference type="UniPathway" id="UPA00143"/>
<dbReference type="PRO" id="PR:Q9SPL2"/>
<dbReference type="Proteomes" id="UP000006548">
    <property type="component" value="Chromosome 5"/>
</dbReference>
<dbReference type="ExpressionAtlas" id="Q9SPL2">
    <property type="expression patterns" value="baseline and differential"/>
</dbReference>
<dbReference type="GO" id="GO:0005737">
    <property type="term" value="C:cytoplasm"/>
    <property type="evidence" value="ECO:0000314"/>
    <property type="project" value="TAIR"/>
</dbReference>
<dbReference type="GO" id="GO:0061630">
    <property type="term" value="F:ubiquitin protein ligase activity"/>
    <property type="evidence" value="ECO:0007669"/>
    <property type="project" value="InterPro"/>
</dbReference>
<dbReference type="GO" id="GO:0008270">
    <property type="term" value="F:zinc ion binding"/>
    <property type="evidence" value="ECO:0007669"/>
    <property type="project" value="UniProtKB-KW"/>
</dbReference>
<dbReference type="GO" id="GO:0016567">
    <property type="term" value="P:protein ubiquitination"/>
    <property type="evidence" value="ECO:0000314"/>
    <property type="project" value="TAIR"/>
</dbReference>
<dbReference type="FunFam" id="3.30.40.10:FF:000022">
    <property type="entry name" value="E3 ubiquitin-protein ligase RING1-like"/>
    <property type="match status" value="1"/>
</dbReference>
<dbReference type="Gene3D" id="3.30.40.10">
    <property type="entry name" value="Zinc/RING finger domain, C3HC4 (zinc finger)"/>
    <property type="match status" value="1"/>
</dbReference>
<dbReference type="InterPro" id="IPR039525">
    <property type="entry name" value="RNF126-like_zinc-ribbon"/>
</dbReference>
<dbReference type="InterPro" id="IPR001841">
    <property type="entry name" value="Znf_RING"/>
</dbReference>
<dbReference type="InterPro" id="IPR013083">
    <property type="entry name" value="Znf_RING/FYVE/PHD"/>
</dbReference>
<dbReference type="PANTHER" id="PTHR15710">
    <property type="entry name" value="E3 UBIQUITIN-PROTEIN LIGASE PRAJA"/>
    <property type="match status" value="1"/>
</dbReference>
<dbReference type="PANTHER" id="PTHR15710:SF242">
    <property type="entry name" value="OS06G0633500 PROTEIN"/>
    <property type="match status" value="1"/>
</dbReference>
<dbReference type="Pfam" id="PF13639">
    <property type="entry name" value="zf-RING_2"/>
    <property type="match status" value="1"/>
</dbReference>
<dbReference type="Pfam" id="PF14369">
    <property type="entry name" value="Zn_ribbon_19"/>
    <property type="match status" value="1"/>
</dbReference>
<dbReference type="SMART" id="SM00184">
    <property type="entry name" value="RING"/>
    <property type="match status" value="1"/>
</dbReference>
<dbReference type="SUPFAM" id="SSF57850">
    <property type="entry name" value="RING/U-box"/>
    <property type="match status" value="1"/>
</dbReference>
<dbReference type="PROSITE" id="PS50089">
    <property type="entry name" value="ZF_RING_2"/>
    <property type="match status" value="1"/>
</dbReference>
<comment type="function">
    <text evidence="3 4">E3 ubiquitin-protein ligase that mediates ubiquitination and subsequent proteasomal degradation of target proteins. Probably forms a minimal ubiquitin ligase complex in cooperation with the E2 enzyme UBC8. Its interaction with COP1 suggests that it may participate in proteasome-mediated degradation of HY5 in vivo.</text>
</comment>
<comment type="catalytic activity">
    <reaction evidence="4">
        <text>S-ubiquitinyl-[E2 ubiquitin-conjugating enzyme]-L-cysteine + [acceptor protein]-L-lysine = [E2 ubiquitin-conjugating enzyme]-L-cysteine + N(6)-ubiquitinyl-[acceptor protein]-L-lysine.</text>
        <dbReference type="EC" id="2.3.2.27"/>
    </reaction>
</comment>
<comment type="pathway">
    <text>Protein modification; protein ubiquitination.</text>
</comment>
<comment type="subunit">
    <text evidence="3 4">Interacts with the RING finger of COP1. Interacts with UBC8 through its N-terminal region.</text>
</comment>
<comment type="interaction">
    <interactant intactId="EBI-301644">
        <id>Q9SPL2</id>
    </interactant>
    <interactant intactId="EBI-301649">
        <id>P43254</id>
        <label>COP1</label>
    </interactant>
    <organismsDiffer>false</organismsDiffer>
    <experiments>6</experiments>
</comment>
<comment type="subcellular location">
    <subcellularLocation>
        <location evidence="6">Cytoplasm</location>
    </subcellularLocation>
</comment>
<comment type="tissue specificity">
    <text evidence="3">Expressed in both light- and dark-grown seedlings.</text>
</comment>
<comment type="domain">
    <text evidence="4">The RING-type zinc finger domain is required but not sufficient for ubiquitin ligase activity. It mediates the interaction with the RING finger of COP1.</text>
</comment>
<keyword id="KW-0963">Cytoplasm</keyword>
<keyword id="KW-0479">Metal-binding</keyword>
<keyword id="KW-1185">Reference proteome</keyword>
<keyword id="KW-0808">Transferase</keyword>
<keyword id="KW-0833">Ubl conjugation pathway</keyword>
<keyword id="KW-0862">Zinc</keyword>
<keyword id="KW-0863">Zinc-finger</keyword>